<organism>
    <name type="scientific">Drosophila melanogaster</name>
    <name type="common">Fruit fly</name>
    <dbReference type="NCBI Taxonomy" id="7227"/>
    <lineage>
        <taxon>Eukaryota</taxon>
        <taxon>Metazoa</taxon>
        <taxon>Ecdysozoa</taxon>
        <taxon>Arthropoda</taxon>
        <taxon>Hexapoda</taxon>
        <taxon>Insecta</taxon>
        <taxon>Pterygota</taxon>
        <taxon>Neoptera</taxon>
        <taxon>Endopterygota</taxon>
        <taxon>Diptera</taxon>
        <taxon>Brachycera</taxon>
        <taxon>Muscomorpha</taxon>
        <taxon>Ephydroidea</taxon>
        <taxon>Drosophilidae</taxon>
        <taxon>Drosophila</taxon>
        <taxon>Sophophora</taxon>
    </lineage>
</organism>
<accession>P17704</accession>
<accession>Q9V3P5</accession>
<name>RS17_DROME</name>
<protein>
    <recommendedName>
        <fullName evidence="1">Small ribosomal subunit protein eS17</fullName>
    </recommendedName>
    <alternativeName>
        <fullName>40S ribosomal protein S17</fullName>
    </alternativeName>
</protein>
<sequence length="131" mass="15285">MGRVRTKTVKKAAKVIIEKYYTRLTLDFHTNKRICEEVAIIPTKPLRNKIAGYVTHLMGRLRHSQVRGISIKLQEEERERRDNYVPAVSALEQDIIEVDADTKEMLKLLDFHNIRGLQLTQPNTNNFGRRN</sequence>
<evidence type="ECO:0000305" key="1"/>
<proteinExistence type="evidence at protein level"/>
<gene>
    <name type="primary">RpS17</name>
    <name type="synonym">M(3)67C</name>
    <name type="ORF">CG3922</name>
</gene>
<dbReference type="EMBL" id="M22142">
    <property type="protein sequence ID" value="AAA28869.1"/>
    <property type="molecule type" value="Genomic_DNA"/>
</dbReference>
<dbReference type="EMBL" id="AE014296">
    <property type="protein sequence ID" value="AAF50272.1"/>
    <property type="molecule type" value="Genomic_DNA"/>
</dbReference>
<dbReference type="EMBL" id="AJ271817">
    <property type="protein sequence ID" value="CAB72251.1"/>
    <property type="molecule type" value="Genomic_DNA"/>
</dbReference>
<dbReference type="EMBL" id="BT001651">
    <property type="protein sequence ID" value="AAN71406.1"/>
    <property type="molecule type" value="mRNA"/>
</dbReference>
<dbReference type="PIR" id="JU0055">
    <property type="entry name" value="R4FF17"/>
</dbReference>
<dbReference type="RefSeq" id="NP_524002.1">
    <property type="nucleotide sequence ID" value="NM_079278.3"/>
</dbReference>
<dbReference type="PDB" id="4V6W">
    <property type="method" value="EM"/>
    <property type="resolution" value="6.00 A"/>
    <property type="chains" value="AR=1-131"/>
</dbReference>
<dbReference type="PDB" id="6XU6">
    <property type="method" value="EM"/>
    <property type="resolution" value="3.50 A"/>
    <property type="chains" value="AR=1-120"/>
</dbReference>
<dbReference type="PDB" id="6XU7">
    <property type="method" value="EM"/>
    <property type="resolution" value="4.90 A"/>
    <property type="chains" value="AR=1-120"/>
</dbReference>
<dbReference type="PDB" id="6XU8">
    <property type="method" value="EM"/>
    <property type="resolution" value="3.00 A"/>
    <property type="chains" value="AR=1-120"/>
</dbReference>
<dbReference type="PDBsum" id="4V6W"/>
<dbReference type="PDBsum" id="6XU6"/>
<dbReference type="PDBsum" id="6XU7"/>
<dbReference type="PDBsum" id="6XU8"/>
<dbReference type="EMDB" id="EMD-10622"/>
<dbReference type="EMDB" id="EMD-10623"/>
<dbReference type="EMDB" id="EMD-10624"/>
<dbReference type="SMR" id="P17704"/>
<dbReference type="BioGRID" id="64481">
    <property type="interactions" value="122"/>
</dbReference>
<dbReference type="DIP" id="DIP-20075N"/>
<dbReference type="FunCoup" id="P17704">
    <property type="interactions" value="1136"/>
</dbReference>
<dbReference type="IntAct" id="P17704">
    <property type="interactions" value="17"/>
</dbReference>
<dbReference type="MINT" id="P17704"/>
<dbReference type="STRING" id="7227.FBpp0076207"/>
<dbReference type="PaxDb" id="7227-FBpp0076207"/>
<dbReference type="DNASU" id="39088"/>
<dbReference type="EnsemblMetazoa" id="FBtr0076479">
    <property type="protein sequence ID" value="FBpp0076207"/>
    <property type="gene ID" value="FBgn0005533"/>
</dbReference>
<dbReference type="GeneID" id="39088"/>
<dbReference type="KEGG" id="dme:Dmel_CG3922"/>
<dbReference type="AGR" id="FB:FBgn0005533"/>
<dbReference type="CTD" id="6218"/>
<dbReference type="FlyBase" id="FBgn0005533">
    <property type="gene designation" value="RpS17"/>
</dbReference>
<dbReference type="VEuPathDB" id="VectorBase:FBgn0005533"/>
<dbReference type="eggNOG" id="KOG0187">
    <property type="taxonomic scope" value="Eukaryota"/>
</dbReference>
<dbReference type="GeneTree" id="ENSGT00390000006548"/>
<dbReference type="HOGENOM" id="CLU_112958_1_1_1"/>
<dbReference type="InParanoid" id="P17704"/>
<dbReference type="OMA" id="MKRIQQG"/>
<dbReference type="OrthoDB" id="1727351at2759"/>
<dbReference type="PhylomeDB" id="P17704"/>
<dbReference type="Reactome" id="R-DME-156827">
    <property type="pathway name" value="L13a-mediated translational silencing of Ceruloplasmin expression"/>
</dbReference>
<dbReference type="Reactome" id="R-DME-1799339">
    <property type="pathway name" value="SRP-dependent cotranslational protein targeting to membrane"/>
</dbReference>
<dbReference type="Reactome" id="R-DME-72649">
    <property type="pathway name" value="Translation initiation complex formation"/>
</dbReference>
<dbReference type="Reactome" id="R-DME-72689">
    <property type="pathway name" value="Formation of a pool of free 40S subunits"/>
</dbReference>
<dbReference type="Reactome" id="R-DME-72695">
    <property type="pathway name" value="Formation of the ternary complex, and subsequently, the 43S complex"/>
</dbReference>
<dbReference type="Reactome" id="R-DME-72702">
    <property type="pathway name" value="Ribosomal scanning and start codon recognition"/>
</dbReference>
<dbReference type="Reactome" id="R-DME-72706">
    <property type="pathway name" value="GTP hydrolysis and joining of the 60S ribosomal subunit"/>
</dbReference>
<dbReference type="Reactome" id="R-DME-975956">
    <property type="pathway name" value="Nonsense Mediated Decay (NMD) independent of the Exon Junction Complex (EJC)"/>
</dbReference>
<dbReference type="Reactome" id="R-DME-975957">
    <property type="pathway name" value="Nonsense Mediated Decay (NMD) enhanced by the Exon Junction Complex (EJC)"/>
</dbReference>
<dbReference type="SignaLink" id="P17704"/>
<dbReference type="BioGRID-ORCS" id="39088">
    <property type="hits" value="0 hits in 1 CRISPR screen"/>
</dbReference>
<dbReference type="ChiTaRS" id="RpS17">
    <property type="organism name" value="fly"/>
</dbReference>
<dbReference type="GenomeRNAi" id="39088"/>
<dbReference type="PRO" id="PR:P17704"/>
<dbReference type="Proteomes" id="UP000000803">
    <property type="component" value="Chromosome 3L"/>
</dbReference>
<dbReference type="Bgee" id="FBgn0005533">
    <property type="expression patterns" value="Expressed in adult enteroendocrine precursor cell in adult midgut (Drosophila) and 281 other cell types or tissues"/>
</dbReference>
<dbReference type="GO" id="GO:0022626">
    <property type="term" value="C:cytosolic ribosome"/>
    <property type="evidence" value="ECO:0000314"/>
    <property type="project" value="FlyBase"/>
</dbReference>
<dbReference type="GO" id="GO:0022627">
    <property type="term" value="C:cytosolic small ribosomal subunit"/>
    <property type="evidence" value="ECO:0000304"/>
    <property type="project" value="FlyBase"/>
</dbReference>
<dbReference type="GO" id="GO:0003735">
    <property type="term" value="F:structural constituent of ribosome"/>
    <property type="evidence" value="ECO:0000314"/>
    <property type="project" value="FlyBase"/>
</dbReference>
<dbReference type="GO" id="GO:0002181">
    <property type="term" value="P:cytoplasmic translation"/>
    <property type="evidence" value="ECO:0000304"/>
    <property type="project" value="FlyBase"/>
</dbReference>
<dbReference type="FunFam" id="1.10.60.20:FF:000001">
    <property type="entry name" value="40S ribosomal protein S17"/>
    <property type="match status" value="1"/>
</dbReference>
<dbReference type="Gene3D" id="1.10.60.20">
    <property type="entry name" value="Ribosomal protein S17e-like"/>
    <property type="match status" value="1"/>
</dbReference>
<dbReference type="HAMAP" id="MF_00511">
    <property type="entry name" value="Ribosomal_eS17"/>
    <property type="match status" value="1"/>
</dbReference>
<dbReference type="InterPro" id="IPR001210">
    <property type="entry name" value="Ribosomal_eS17"/>
</dbReference>
<dbReference type="InterPro" id="IPR018273">
    <property type="entry name" value="Ribosomal_eS17_CS"/>
</dbReference>
<dbReference type="InterPro" id="IPR036401">
    <property type="entry name" value="Ribosomal_eS17_sf"/>
</dbReference>
<dbReference type="NCBIfam" id="NF002242">
    <property type="entry name" value="PRK01151.1"/>
    <property type="match status" value="1"/>
</dbReference>
<dbReference type="PANTHER" id="PTHR10732">
    <property type="entry name" value="40S RIBOSOMAL PROTEIN S17"/>
    <property type="match status" value="1"/>
</dbReference>
<dbReference type="PANTHER" id="PTHR10732:SF0">
    <property type="entry name" value="40S RIBOSOMAL PROTEIN S17"/>
    <property type="match status" value="1"/>
</dbReference>
<dbReference type="Pfam" id="PF00833">
    <property type="entry name" value="Ribosomal_S17e"/>
    <property type="match status" value="1"/>
</dbReference>
<dbReference type="SUPFAM" id="SSF116820">
    <property type="entry name" value="Rps17e-like"/>
    <property type="match status" value="1"/>
</dbReference>
<dbReference type="PROSITE" id="PS00712">
    <property type="entry name" value="RIBOSOMAL_S17E"/>
    <property type="match status" value="1"/>
</dbReference>
<keyword id="KW-0002">3D-structure</keyword>
<keyword id="KW-1185">Reference proteome</keyword>
<keyword id="KW-0687">Ribonucleoprotein</keyword>
<keyword id="KW-0689">Ribosomal protein</keyword>
<feature type="initiator methionine" description="Removed">
    <location>
        <position position="1"/>
    </location>
</feature>
<feature type="chain" id="PRO_0000141533" description="Small ribosomal subunit protein eS17">
    <location>
        <begin position="2"/>
        <end position="131"/>
    </location>
</feature>
<comment type="similarity">
    <text evidence="1">Belongs to the eukaryotic ribosomal protein eS17 family.</text>
</comment>
<reference key="1">
    <citation type="journal article" date="1989" name="Gene">
        <title>The Drosophila melanogaster RPS17 gene encoding ribosomal protein S17.</title>
        <authorList>
            <person name="Maki C."/>
            <person name="Rhoads D.D."/>
            <person name="Stewart M.J."/>
            <person name="van Slyke B."/>
            <person name="Denell R.E."/>
            <person name="Roufa D.J."/>
        </authorList>
    </citation>
    <scope>NUCLEOTIDE SEQUENCE [GENOMIC DNA]</scope>
</reference>
<reference key="2">
    <citation type="submission" date="2000-02" db="EMBL/GenBank/DDBJ databases">
        <title>Characterization of the Drosophila gene for the heavy metal-responsive transcription factor MTF-1.</title>
        <authorList>
            <person name="Zhang B."/>
            <person name="Georgiev O."/>
            <person name="Schaffner W."/>
        </authorList>
    </citation>
    <scope>NUCLEOTIDE SEQUENCE</scope>
</reference>
<reference key="3">
    <citation type="journal article" date="2000" name="Science">
        <title>The genome sequence of Drosophila melanogaster.</title>
        <authorList>
            <person name="Adams M.D."/>
            <person name="Celniker S.E."/>
            <person name="Holt R.A."/>
            <person name="Evans C.A."/>
            <person name="Gocayne J.D."/>
            <person name="Amanatides P.G."/>
            <person name="Scherer S.E."/>
            <person name="Li P.W."/>
            <person name="Hoskins R.A."/>
            <person name="Galle R.F."/>
            <person name="George R.A."/>
            <person name="Lewis S.E."/>
            <person name="Richards S."/>
            <person name="Ashburner M."/>
            <person name="Henderson S.N."/>
            <person name="Sutton G.G."/>
            <person name="Wortman J.R."/>
            <person name="Yandell M.D."/>
            <person name="Zhang Q."/>
            <person name="Chen L.X."/>
            <person name="Brandon R.C."/>
            <person name="Rogers Y.-H.C."/>
            <person name="Blazej R.G."/>
            <person name="Champe M."/>
            <person name="Pfeiffer B.D."/>
            <person name="Wan K.H."/>
            <person name="Doyle C."/>
            <person name="Baxter E.G."/>
            <person name="Helt G."/>
            <person name="Nelson C.R."/>
            <person name="Miklos G.L.G."/>
            <person name="Abril J.F."/>
            <person name="Agbayani A."/>
            <person name="An H.-J."/>
            <person name="Andrews-Pfannkoch C."/>
            <person name="Baldwin D."/>
            <person name="Ballew R.M."/>
            <person name="Basu A."/>
            <person name="Baxendale J."/>
            <person name="Bayraktaroglu L."/>
            <person name="Beasley E.M."/>
            <person name="Beeson K.Y."/>
            <person name="Benos P.V."/>
            <person name="Berman B.P."/>
            <person name="Bhandari D."/>
            <person name="Bolshakov S."/>
            <person name="Borkova D."/>
            <person name="Botchan M.R."/>
            <person name="Bouck J."/>
            <person name="Brokstein P."/>
            <person name="Brottier P."/>
            <person name="Burtis K.C."/>
            <person name="Busam D.A."/>
            <person name="Butler H."/>
            <person name="Cadieu E."/>
            <person name="Center A."/>
            <person name="Chandra I."/>
            <person name="Cherry J.M."/>
            <person name="Cawley S."/>
            <person name="Dahlke C."/>
            <person name="Davenport L.B."/>
            <person name="Davies P."/>
            <person name="de Pablos B."/>
            <person name="Delcher A."/>
            <person name="Deng Z."/>
            <person name="Mays A.D."/>
            <person name="Dew I."/>
            <person name="Dietz S.M."/>
            <person name="Dodson K."/>
            <person name="Doup L.E."/>
            <person name="Downes M."/>
            <person name="Dugan-Rocha S."/>
            <person name="Dunkov B.C."/>
            <person name="Dunn P."/>
            <person name="Durbin K.J."/>
            <person name="Evangelista C.C."/>
            <person name="Ferraz C."/>
            <person name="Ferriera S."/>
            <person name="Fleischmann W."/>
            <person name="Fosler C."/>
            <person name="Gabrielian A.E."/>
            <person name="Garg N.S."/>
            <person name="Gelbart W.M."/>
            <person name="Glasser K."/>
            <person name="Glodek A."/>
            <person name="Gong F."/>
            <person name="Gorrell J.H."/>
            <person name="Gu Z."/>
            <person name="Guan P."/>
            <person name="Harris M."/>
            <person name="Harris N.L."/>
            <person name="Harvey D.A."/>
            <person name="Heiman T.J."/>
            <person name="Hernandez J.R."/>
            <person name="Houck J."/>
            <person name="Hostin D."/>
            <person name="Houston K.A."/>
            <person name="Howland T.J."/>
            <person name="Wei M.-H."/>
            <person name="Ibegwam C."/>
            <person name="Jalali M."/>
            <person name="Kalush F."/>
            <person name="Karpen G.H."/>
            <person name="Ke Z."/>
            <person name="Kennison J.A."/>
            <person name="Ketchum K.A."/>
            <person name="Kimmel B.E."/>
            <person name="Kodira C.D."/>
            <person name="Kraft C.L."/>
            <person name="Kravitz S."/>
            <person name="Kulp D."/>
            <person name="Lai Z."/>
            <person name="Lasko P."/>
            <person name="Lei Y."/>
            <person name="Levitsky A.A."/>
            <person name="Li J.H."/>
            <person name="Li Z."/>
            <person name="Liang Y."/>
            <person name="Lin X."/>
            <person name="Liu X."/>
            <person name="Mattei B."/>
            <person name="McIntosh T.C."/>
            <person name="McLeod M.P."/>
            <person name="McPherson D."/>
            <person name="Merkulov G."/>
            <person name="Milshina N.V."/>
            <person name="Mobarry C."/>
            <person name="Morris J."/>
            <person name="Moshrefi A."/>
            <person name="Mount S.M."/>
            <person name="Moy M."/>
            <person name="Murphy B."/>
            <person name="Murphy L."/>
            <person name="Muzny D.M."/>
            <person name="Nelson D.L."/>
            <person name="Nelson D.R."/>
            <person name="Nelson K.A."/>
            <person name="Nixon K."/>
            <person name="Nusskern D.R."/>
            <person name="Pacleb J.M."/>
            <person name="Palazzolo M."/>
            <person name="Pittman G.S."/>
            <person name="Pan S."/>
            <person name="Pollard J."/>
            <person name="Puri V."/>
            <person name="Reese M.G."/>
            <person name="Reinert K."/>
            <person name="Remington K."/>
            <person name="Saunders R.D.C."/>
            <person name="Scheeler F."/>
            <person name="Shen H."/>
            <person name="Shue B.C."/>
            <person name="Siden-Kiamos I."/>
            <person name="Simpson M."/>
            <person name="Skupski M.P."/>
            <person name="Smith T.J."/>
            <person name="Spier E."/>
            <person name="Spradling A.C."/>
            <person name="Stapleton M."/>
            <person name="Strong R."/>
            <person name="Sun E."/>
            <person name="Svirskas R."/>
            <person name="Tector C."/>
            <person name="Turner R."/>
            <person name="Venter E."/>
            <person name="Wang A.H."/>
            <person name="Wang X."/>
            <person name="Wang Z.-Y."/>
            <person name="Wassarman D.A."/>
            <person name="Weinstock G.M."/>
            <person name="Weissenbach J."/>
            <person name="Williams S.M."/>
            <person name="Woodage T."/>
            <person name="Worley K.C."/>
            <person name="Wu D."/>
            <person name="Yang S."/>
            <person name="Yao Q.A."/>
            <person name="Ye J."/>
            <person name="Yeh R.-F."/>
            <person name="Zaveri J.S."/>
            <person name="Zhan M."/>
            <person name="Zhang G."/>
            <person name="Zhao Q."/>
            <person name="Zheng L."/>
            <person name="Zheng X.H."/>
            <person name="Zhong F.N."/>
            <person name="Zhong W."/>
            <person name="Zhou X."/>
            <person name="Zhu S.C."/>
            <person name="Zhu X."/>
            <person name="Smith H.O."/>
            <person name="Gibbs R.A."/>
            <person name="Myers E.W."/>
            <person name="Rubin G.M."/>
            <person name="Venter J.C."/>
        </authorList>
    </citation>
    <scope>NUCLEOTIDE SEQUENCE [LARGE SCALE GENOMIC DNA]</scope>
    <source>
        <strain>Berkeley</strain>
    </source>
</reference>
<reference key="4">
    <citation type="journal article" date="2002" name="Genome Biol.">
        <title>Annotation of the Drosophila melanogaster euchromatic genome: a systematic review.</title>
        <authorList>
            <person name="Misra S."/>
            <person name="Crosby M.A."/>
            <person name="Mungall C.J."/>
            <person name="Matthews B.B."/>
            <person name="Campbell K.S."/>
            <person name="Hradecky P."/>
            <person name="Huang Y."/>
            <person name="Kaminker J.S."/>
            <person name="Millburn G.H."/>
            <person name="Prochnik S.E."/>
            <person name="Smith C.D."/>
            <person name="Tupy J.L."/>
            <person name="Whitfield E.J."/>
            <person name="Bayraktaroglu L."/>
            <person name="Berman B.P."/>
            <person name="Bettencourt B.R."/>
            <person name="Celniker S.E."/>
            <person name="de Grey A.D.N.J."/>
            <person name="Drysdale R.A."/>
            <person name="Harris N.L."/>
            <person name="Richter J."/>
            <person name="Russo S."/>
            <person name="Schroeder A.J."/>
            <person name="Shu S.Q."/>
            <person name="Stapleton M."/>
            <person name="Yamada C."/>
            <person name="Ashburner M."/>
            <person name="Gelbart W.M."/>
            <person name="Rubin G.M."/>
            <person name="Lewis S.E."/>
        </authorList>
    </citation>
    <scope>GENOME REANNOTATION</scope>
    <source>
        <strain>Berkeley</strain>
    </source>
</reference>
<reference key="5">
    <citation type="journal article" date="2002" name="Genome Biol.">
        <title>A Drosophila full-length cDNA resource.</title>
        <authorList>
            <person name="Stapleton M."/>
            <person name="Carlson J.W."/>
            <person name="Brokstein P."/>
            <person name="Yu C."/>
            <person name="Champe M."/>
            <person name="George R.A."/>
            <person name="Guarin H."/>
            <person name="Kronmiller B."/>
            <person name="Pacleb J.M."/>
            <person name="Park S."/>
            <person name="Wan K.H."/>
            <person name="Rubin G.M."/>
            <person name="Celniker S.E."/>
        </authorList>
    </citation>
    <scope>NUCLEOTIDE SEQUENCE [LARGE SCALE MRNA]</scope>
    <source>
        <strain>Berkeley</strain>
        <tissue>Embryo</tissue>
    </source>
</reference>
<reference key="6">
    <citation type="journal article" date="2013" name="Nature">
        <title>Structures of the human and Drosophila 80S ribosome.</title>
        <authorList>
            <person name="Anger A.M."/>
            <person name="Armache J.P."/>
            <person name="Berninghausen O."/>
            <person name="Habeck M."/>
            <person name="Subklewe M."/>
            <person name="Wilson D.N."/>
            <person name="Beckmann R."/>
        </authorList>
    </citation>
    <scope>STRUCTURE BY ELECTRON MICROSCOPY (6.0 ANGSTROMS) OF THE 80S RIBOSOME</scope>
</reference>